<feature type="chain" id="PRO_0000381662" description="Biotin synthase">
    <location>
        <begin position="1"/>
        <end position="330"/>
    </location>
</feature>
<feature type="domain" description="Radical SAM core" evidence="2">
    <location>
        <begin position="53"/>
        <end position="276"/>
    </location>
</feature>
<feature type="binding site" evidence="1">
    <location>
        <position position="68"/>
    </location>
    <ligand>
        <name>[4Fe-4S] cluster</name>
        <dbReference type="ChEBI" id="CHEBI:49883"/>
        <note>4Fe-4S-S-AdoMet</note>
    </ligand>
</feature>
<feature type="binding site" evidence="1">
    <location>
        <position position="72"/>
    </location>
    <ligand>
        <name>[4Fe-4S] cluster</name>
        <dbReference type="ChEBI" id="CHEBI:49883"/>
        <note>4Fe-4S-S-AdoMet</note>
    </ligand>
</feature>
<feature type="binding site" evidence="1">
    <location>
        <position position="75"/>
    </location>
    <ligand>
        <name>[4Fe-4S] cluster</name>
        <dbReference type="ChEBI" id="CHEBI:49883"/>
        <note>4Fe-4S-S-AdoMet</note>
    </ligand>
</feature>
<feature type="binding site" evidence="1">
    <location>
        <position position="112"/>
    </location>
    <ligand>
        <name>[2Fe-2S] cluster</name>
        <dbReference type="ChEBI" id="CHEBI:190135"/>
    </ligand>
</feature>
<feature type="binding site" evidence="1">
    <location>
        <position position="144"/>
    </location>
    <ligand>
        <name>[2Fe-2S] cluster</name>
        <dbReference type="ChEBI" id="CHEBI:190135"/>
    </ligand>
</feature>
<feature type="binding site" evidence="1">
    <location>
        <position position="204"/>
    </location>
    <ligand>
        <name>[2Fe-2S] cluster</name>
        <dbReference type="ChEBI" id="CHEBI:190135"/>
    </ligand>
</feature>
<feature type="binding site" evidence="1">
    <location>
        <position position="274"/>
    </location>
    <ligand>
        <name>[2Fe-2S] cluster</name>
        <dbReference type="ChEBI" id="CHEBI:190135"/>
    </ligand>
</feature>
<comment type="function">
    <text evidence="1">Catalyzes the conversion of dethiobiotin (DTB) to biotin by the insertion of a sulfur atom into dethiobiotin via a radical-based mechanism.</text>
</comment>
<comment type="catalytic activity">
    <reaction evidence="1">
        <text>(4R,5S)-dethiobiotin + (sulfur carrier)-SH + 2 reduced [2Fe-2S]-[ferredoxin] + 2 S-adenosyl-L-methionine = (sulfur carrier)-H + biotin + 2 5'-deoxyadenosine + 2 L-methionine + 2 oxidized [2Fe-2S]-[ferredoxin]</text>
        <dbReference type="Rhea" id="RHEA:22060"/>
        <dbReference type="Rhea" id="RHEA-COMP:10000"/>
        <dbReference type="Rhea" id="RHEA-COMP:10001"/>
        <dbReference type="Rhea" id="RHEA-COMP:14737"/>
        <dbReference type="Rhea" id="RHEA-COMP:14739"/>
        <dbReference type="ChEBI" id="CHEBI:17319"/>
        <dbReference type="ChEBI" id="CHEBI:29917"/>
        <dbReference type="ChEBI" id="CHEBI:33737"/>
        <dbReference type="ChEBI" id="CHEBI:33738"/>
        <dbReference type="ChEBI" id="CHEBI:57586"/>
        <dbReference type="ChEBI" id="CHEBI:57844"/>
        <dbReference type="ChEBI" id="CHEBI:59789"/>
        <dbReference type="ChEBI" id="CHEBI:64428"/>
        <dbReference type="ChEBI" id="CHEBI:149473"/>
        <dbReference type="EC" id="2.8.1.6"/>
    </reaction>
</comment>
<comment type="cofactor">
    <cofactor evidence="1">
        <name>[4Fe-4S] cluster</name>
        <dbReference type="ChEBI" id="CHEBI:49883"/>
    </cofactor>
    <text evidence="1">Binds 1 [4Fe-4S] cluster. The cluster is coordinated with 3 cysteines and an exchangeable S-adenosyl-L-methionine.</text>
</comment>
<comment type="cofactor">
    <cofactor evidence="1">
        <name>[2Fe-2S] cluster</name>
        <dbReference type="ChEBI" id="CHEBI:190135"/>
    </cofactor>
    <text evidence="1">Binds 1 [2Fe-2S] cluster. The cluster is coordinated with 3 cysteines and 1 arginine.</text>
</comment>
<comment type="pathway">
    <text evidence="1">Cofactor biosynthesis; biotin biosynthesis; biotin from 7,8-diaminononanoate: step 2/2.</text>
</comment>
<comment type="subunit">
    <text evidence="1">Homodimer.</text>
</comment>
<comment type="similarity">
    <text evidence="1">Belongs to the radical SAM superfamily. Biotin synthase family.</text>
</comment>
<evidence type="ECO:0000255" key="1">
    <source>
        <dbReference type="HAMAP-Rule" id="MF_01694"/>
    </source>
</evidence>
<evidence type="ECO:0000255" key="2">
    <source>
        <dbReference type="PROSITE-ProRule" id="PRU01266"/>
    </source>
</evidence>
<accession>Q8E197</accession>
<proteinExistence type="inferred from homology"/>
<dbReference type="EC" id="2.8.1.6" evidence="1"/>
<dbReference type="EMBL" id="AE009948">
    <property type="protein sequence ID" value="AAM99366.1"/>
    <property type="molecule type" value="Genomic_DNA"/>
</dbReference>
<dbReference type="RefSeq" id="NP_687494.1">
    <property type="nucleotide sequence ID" value="NC_004116.1"/>
</dbReference>
<dbReference type="RefSeq" id="WP_000009961.1">
    <property type="nucleotide sequence ID" value="NC_004116.1"/>
</dbReference>
<dbReference type="SMR" id="Q8E197"/>
<dbReference type="STRING" id="208435.SAG0464"/>
<dbReference type="KEGG" id="sag:SAG0464"/>
<dbReference type="PATRIC" id="fig|208435.3.peg.462"/>
<dbReference type="HOGENOM" id="CLU_033172_2_1_9"/>
<dbReference type="OrthoDB" id="9786826at2"/>
<dbReference type="UniPathway" id="UPA00078">
    <property type="reaction ID" value="UER00162"/>
</dbReference>
<dbReference type="Proteomes" id="UP000000821">
    <property type="component" value="Chromosome"/>
</dbReference>
<dbReference type="GO" id="GO:0051537">
    <property type="term" value="F:2 iron, 2 sulfur cluster binding"/>
    <property type="evidence" value="ECO:0007669"/>
    <property type="project" value="UniProtKB-KW"/>
</dbReference>
<dbReference type="GO" id="GO:0051539">
    <property type="term" value="F:4 iron, 4 sulfur cluster binding"/>
    <property type="evidence" value="ECO:0007669"/>
    <property type="project" value="UniProtKB-KW"/>
</dbReference>
<dbReference type="GO" id="GO:0004076">
    <property type="term" value="F:biotin synthase activity"/>
    <property type="evidence" value="ECO:0007669"/>
    <property type="project" value="UniProtKB-UniRule"/>
</dbReference>
<dbReference type="GO" id="GO:0005506">
    <property type="term" value="F:iron ion binding"/>
    <property type="evidence" value="ECO:0007669"/>
    <property type="project" value="UniProtKB-UniRule"/>
</dbReference>
<dbReference type="GO" id="GO:0009102">
    <property type="term" value="P:biotin biosynthetic process"/>
    <property type="evidence" value="ECO:0007669"/>
    <property type="project" value="UniProtKB-UniRule"/>
</dbReference>
<dbReference type="CDD" id="cd01335">
    <property type="entry name" value="Radical_SAM"/>
    <property type="match status" value="1"/>
</dbReference>
<dbReference type="Gene3D" id="3.20.20.70">
    <property type="entry name" value="Aldolase class I"/>
    <property type="match status" value="1"/>
</dbReference>
<dbReference type="HAMAP" id="MF_01694">
    <property type="entry name" value="BioB"/>
    <property type="match status" value="1"/>
</dbReference>
<dbReference type="InterPro" id="IPR013785">
    <property type="entry name" value="Aldolase_TIM"/>
</dbReference>
<dbReference type="InterPro" id="IPR010722">
    <property type="entry name" value="BATS_dom"/>
</dbReference>
<dbReference type="InterPro" id="IPR002684">
    <property type="entry name" value="Biotin_synth/BioAB"/>
</dbReference>
<dbReference type="InterPro" id="IPR024177">
    <property type="entry name" value="Biotin_synthase"/>
</dbReference>
<dbReference type="InterPro" id="IPR006638">
    <property type="entry name" value="Elp3/MiaA/NifB-like_rSAM"/>
</dbReference>
<dbReference type="InterPro" id="IPR007197">
    <property type="entry name" value="rSAM"/>
</dbReference>
<dbReference type="NCBIfam" id="TIGR00433">
    <property type="entry name" value="bioB"/>
    <property type="match status" value="1"/>
</dbReference>
<dbReference type="PANTHER" id="PTHR22976">
    <property type="entry name" value="BIOTIN SYNTHASE"/>
    <property type="match status" value="1"/>
</dbReference>
<dbReference type="PANTHER" id="PTHR22976:SF2">
    <property type="entry name" value="BIOTIN SYNTHASE, MITOCHONDRIAL"/>
    <property type="match status" value="1"/>
</dbReference>
<dbReference type="Pfam" id="PF06968">
    <property type="entry name" value="BATS"/>
    <property type="match status" value="1"/>
</dbReference>
<dbReference type="Pfam" id="PF04055">
    <property type="entry name" value="Radical_SAM"/>
    <property type="match status" value="1"/>
</dbReference>
<dbReference type="PIRSF" id="PIRSF001619">
    <property type="entry name" value="Biotin_synth"/>
    <property type="match status" value="1"/>
</dbReference>
<dbReference type="SFLD" id="SFLDG01060">
    <property type="entry name" value="BATS_domain_containing"/>
    <property type="match status" value="1"/>
</dbReference>
<dbReference type="SFLD" id="SFLDG01278">
    <property type="entry name" value="biotin_synthase_like"/>
    <property type="match status" value="1"/>
</dbReference>
<dbReference type="SMART" id="SM00876">
    <property type="entry name" value="BATS"/>
    <property type="match status" value="1"/>
</dbReference>
<dbReference type="SMART" id="SM00729">
    <property type="entry name" value="Elp3"/>
    <property type="match status" value="1"/>
</dbReference>
<dbReference type="SUPFAM" id="SSF102114">
    <property type="entry name" value="Radical SAM enzymes"/>
    <property type="match status" value="1"/>
</dbReference>
<dbReference type="PROSITE" id="PS51918">
    <property type="entry name" value="RADICAL_SAM"/>
    <property type="match status" value="1"/>
</dbReference>
<name>BIOB_STRA5</name>
<organism>
    <name type="scientific">Streptococcus agalactiae serotype V (strain ATCC BAA-611 / 2603 V/R)</name>
    <dbReference type="NCBI Taxonomy" id="208435"/>
    <lineage>
        <taxon>Bacteria</taxon>
        <taxon>Bacillati</taxon>
        <taxon>Bacillota</taxon>
        <taxon>Bacilli</taxon>
        <taxon>Lactobacillales</taxon>
        <taxon>Streptococcaceae</taxon>
        <taxon>Streptococcus</taxon>
    </lineage>
</organism>
<keyword id="KW-0001">2Fe-2S</keyword>
<keyword id="KW-0004">4Fe-4S</keyword>
<keyword id="KW-0093">Biotin biosynthesis</keyword>
<keyword id="KW-0408">Iron</keyword>
<keyword id="KW-0411">Iron-sulfur</keyword>
<keyword id="KW-0479">Metal-binding</keyword>
<keyword id="KW-1185">Reference proteome</keyword>
<keyword id="KW-0949">S-adenosyl-L-methionine</keyword>
<keyword id="KW-0808">Transferase</keyword>
<sequence length="330" mass="37338">MSFQTNYIHLADEILSGKTSISYEQALEILNSDENWWEIYAAALYLKNQVSRNNIRLNVLLSAKQGLCAENCGYCSQSKESTADIDKFGLLPQNVILKQAIVAHQNGASVFCIAMSGTKPSKREIEQLCQVIPEIKKSLPLEICLTAGFLDREQLHQLKQAGIDRINHNLNTPEENYPNIATTHSFKDRCDTLERIHNEDIDVCSGFICGMGESDEGLITLAFRLKELDPYSIPVNFLLAVEGTPLGKYNYLTPIKCLKIMAMLRFVFPFKELRLSAGREVHFENFESLVTLLVDSTFLGNYLTEGGRNQHTDIEFLEKLQLNHTKKELI</sequence>
<reference key="1">
    <citation type="journal article" date="2002" name="Proc. Natl. Acad. Sci. U.S.A.">
        <title>Complete genome sequence and comparative genomic analysis of an emerging human pathogen, serotype V Streptococcus agalactiae.</title>
        <authorList>
            <person name="Tettelin H."/>
            <person name="Masignani V."/>
            <person name="Cieslewicz M.J."/>
            <person name="Eisen J.A."/>
            <person name="Peterson S.N."/>
            <person name="Wessels M.R."/>
            <person name="Paulsen I.T."/>
            <person name="Nelson K.E."/>
            <person name="Margarit I."/>
            <person name="Read T.D."/>
            <person name="Madoff L.C."/>
            <person name="Wolf A.M."/>
            <person name="Beanan M.J."/>
            <person name="Brinkac L.M."/>
            <person name="Daugherty S.C."/>
            <person name="DeBoy R.T."/>
            <person name="Durkin A.S."/>
            <person name="Kolonay J.F."/>
            <person name="Madupu R."/>
            <person name="Lewis M.R."/>
            <person name="Radune D."/>
            <person name="Fedorova N.B."/>
            <person name="Scanlan D."/>
            <person name="Khouri H.M."/>
            <person name="Mulligan S."/>
            <person name="Carty H.A."/>
            <person name="Cline R.T."/>
            <person name="Van Aken S.E."/>
            <person name="Gill J."/>
            <person name="Scarselli M."/>
            <person name="Mora M."/>
            <person name="Iacobini E.T."/>
            <person name="Brettoni C."/>
            <person name="Galli G."/>
            <person name="Mariani M."/>
            <person name="Vegni F."/>
            <person name="Maione D."/>
            <person name="Rinaudo D."/>
            <person name="Rappuoli R."/>
            <person name="Telford J.L."/>
            <person name="Kasper D.L."/>
            <person name="Grandi G."/>
            <person name="Fraser C.M."/>
        </authorList>
    </citation>
    <scope>NUCLEOTIDE SEQUENCE [LARGE SCALE GENOMIC DNA]</scope>
    <source>
        <strain>ATCC BAA-611 / 2603 V/R</strain>
    </source>
</reference>
<protein>
    <recommendedName>
        <fullName evidence="1">Biotin synthase</fullName>
        <ecNumber evidence="1">2.8.1.6</ecNumber>
    </recommendedName>
</protein>
<gene>
    <name evidence="1" type="primary">bioB</name>
    <name type="ordered locus">SAG0464</name>
</gene>